<gene>
    <name type="primary">ytcA</name>
    <name type="ordered locus">b4622</name>
</gene>
<dbReference type="EMBL" id="U00096">
    <property type="protein sequence ID" value="ABP93459.1"/>
    <property type="molecule type" value="Genomic_DNA"/>
</dbReference>
<dbReference type="RefSeq" id="WP_001295389.1">
    <property type="nucleotide sequence ID" value="NZ_SSZK01000016.1"/>
</dbReference>
<dbReference type="RefSeq" id="YP_001165334.1">
    <property type="nucleotide sequence ID" value="NC_000913.3"/>
</dbReference>
<dbReference type="FunCoup" id="A5A630">
    <property type="interactions" value="14"/>
</dbReference>
<dbReference type="STRING" id="511145.b4622"/>
<dbReference type="PaxDb" id="511145-b4622"/>
<dbReference type="EnsemblBacteria" id="ABP93459">
    <property type="protein sequence ID" value="ABP93459"/>
    <property type="gene ID" value="b4622"/>
</dbReference>
<dbReference type="GeneID" id="5061530"/>
<dbReference type="KEGG" id="eco:b4622"/>
<dbReference type="KEGG" id="ecoc:C3026_22070"/>
<dbReference type="PATRIC" id="fig|511145.12.peg.4208"/>
<dbReference type="eggNOG" id="ENOG5033AJ8">
    <property type="taxonomic scope" value="Bacteria"/>
</dbReference>
<dbReference type="InParanoid" id="A5A630"/>
<dbReference type="OMA" id="AFPGWFF"/>
<dbReference type="OrthoDB" id="123105at2"/>
<dbReference type="BioCyc" id="EcoCyc:MONOMER0-2830"/>
<dbReference type="PRO" id="PR:A5A630"/>
<dbReference type="Proteomes" id="UP000000625">
    <property type="component" value="Chromosome"/>
</dbReference>
<dbReference type="GO" id="GO:0005886">
    <property type="term" value="C:plasma membrane"/>
    <property type="evidence" value="ECO:0007669"/>
    <property type="project" value="UniProtKB-SubCell"/>
</dbReference>
<dbReference type="InterPro" id="IPR031381">
    <property type="entry name" value="YtcA"/>
</dbReference>
<dbReference type="Pfam" id="PF17090">
    <property type="entry name" value="Ytca"/>
    <property type="match status" value="1"/>
</dbReference>
<dbReference type="PROSITE" id="PS51257">
    <property type="entry name" value="PROKAR_LIPOPROTEIN"/>
    <property type="match status" value="1"/>
</dbReference>
<proteinExistence type="inferred from homology"/>
<name>YTCA_ECOLI</name>
<feature type="signal peptide" evidence="2">
    <location>
        <begin position="1"/>
        <end position="26"/>
    </location>
</feature>
<feature type="chain" id="PRO_0000311868" description="Uncharacterized protein YtcA">
    <location>
        <begin position="27"/>
        <end position="91"/>
    </location>
</feature>
<feature type="transmembrane region" description="Helical" evidence="1">
    <location>
        <begin position="33"/>
        <end position="53"/>
    </location>
</feature>
<feature type="transmembrane region" description="Helical" evidence="1">
    <location>
        <begin position="70"/>
        <end position="90"/>
    </location>
</feature>
<feature type="lipid moiety-binding region" description="N-palmitoyl cysteine" evidence="2">
    <location>
        <position position="27"/>
    </location>
</feature>
<feature type="lipid moiety-binding region" description="S-diacylglycerol cysteine" evidence="2">
    <location>
        <position position="27"/>
    </location>
</feature>
<keyword id="KW-1003">Cell membrane</keyword>
<keyword id="KW-0449">Lipoprotein</keyword>
<keyword id="KW-0472">Membrane</keyword>
<keyword id="KW-0564">Palmitate</keyword>
<keyword id="KW-1185">Reference proteome</keyword>
<keyword id="KW-0732">Signal</keyword>
<keyword id="KW-0812">Transmembrane</keyword>
<keyword id="KW-1133">Transmembrane helix</keyword>
<accession>A5A630</accession>
<comment type="subcellular location">
    <subcellularLocation>
        <location evidence="2">Cell membrane</location>
        <topology evidence="2">Lipid-anchor</topology>
    </subcellularLocation>
    <subcellularLocation>
        <location evidence="3">Membrane</location>
        <topology evidence="3">Multi-pass membrane protein</topology>
    </subcellularLocation>
</comment>
<comment type="similarity">
    <text evidence="3">Belongs to the YtcA family.</text>
</comment>
<reference key="1">
    <citation type="journal article" date="1997" name="Science">
        <title>The complete genome sequence of Escherichia coli K-12.</title>
        <authorList>
            <person name="Blattner F.R."/>
            <person name="Plunkett G. III"/>
            <person name="Bloch C.A."/>
            <person name="Perna N.T."/>
            <person name="Burland V."/>
            <person name="Riley M."/>
            <person name="Collado-Vides J."/>
            <person name="Glasner J.D."/>
            <person name="Rode C.K."/>
            <person name="Mayhew G.F."/>
            <person name="Gregor J."/>
            <person name="Davis N.W."/>
            <person name="Kirkpatrick H.A."/>
            <person name="Goeden M.A."/>
            <person name="Rose D.J."/>
            <person name="Mau B."/>
            <person name="Shao Y."/>
        </authorList>
    </citation>
    <scope>NUCLEOTIDE SEQUENCE [LARGE SCALE GENOMIC DNA]</scope>
    <source>
        <strain>K12 / MG1655 / ATCC 47076</strain>
    </source>
</reference>
<organism>
    <name type="scientific">Escherichia coli (strain K12)</name>
    <dbReference type="NCBI Taxonomy" id="83333"/>
    <lineage>
        <taxon>Bacteria</taxon>
        <taxon>Pseudomonadati</taxon>
        <taxon>Pseudomonadota</taxon>
        <taxon>Gammaproteobacteria</taxon>
        <taxon>Enterobacterales</taxon>
        <taxon>Enterobacteriaceae</taxon>
        <taxon>Escherichia</taxon>
    </lineage>
</organism>
<protein>
    <recommendedName>
        <fullName>Uncharacterized protein YtcA</fullName>
    </recommendedName>
</protein>
<sequence length="91" mass="10257">MPTVLSRMAMQLKKTAWIIPVFMVSGCSLSPAIPVIGAYYPSWFFCAIASLILTLITRRVIQRANINLAFVGIIYTALFALYAMLFWLAFF</sequence>
<evidence type="ECO:0000255" key="1"/>
<evidence type="ECO:0000255" key="2">
    <source>
        <dbReference type="PROSITE-ProRule" id="PRU00303"/>
    </source>
</evidence>
<evidence type="ECO:0000305" key="3"/>